<protein>
    <recommendedName>
        <fullName evidence="1">DNA primase</fullName>
        <ecNumber evidence="1">2.7.7.-</ecNumber>
    </recommendedName>
</protein>
<organismHost>
    <name type="scientific">Saimiri sciureus</name>
    <name type="common">Common squirrel monkey</name>
    <dbReference type="NCBI Taxonomy" id="9521"/>
</organismHost>
<name>PRIM_SHV21</name>
<accession>P14346</accession>
<keyword id="KW-0235">DNA replication</keyword>
<keyword id="KW-1048">Host nucleus</keyword>
<keyword id="KW-0479">Metal-binding</keyword>
<keyword id="KW-1185">Reference proteome</keyword>
<keyword id="KW-0808">Transferase</keyword>
<keyword id="KW-0862">Zinc</keyword>
<keyword id="KW-0863">Zinc-finger</keyword>
<reference key="1">
    <citation type="journal article" date="1992" name="J. Virol.">
        <title>Primary structure of the herpesvirus saimiri genome.</title>
        <authorList>
            <person name="Albrecht J.-C."/>
            <person name="Nicholas J."/>
            <person name="Biller D."/>
            <person name="Cameron K.R."/>
            <person name="Biesinger B."/>
            <person name="Newman C."/>
            <person name="Wittmann S."/>
            <person name="Craxton M.A."/>
            <person name="Coleman H."/>
            <person name="Fleckenstein B."/>
            <person name="Honess R.W."/>
        </authorList>
    </citation>
    <scope>NUCLEOTIDE SEQUENCE [LARGE SCALE GENOMIC DNA]</scope>
</reference>
<reference key="2">
    <citation type="journal article" date="1992" name="Virology">
        <title>Analysis of nucleotide sequence of the rightmost 43 kbp of herpesvirus saimiri (HVS) L-DNA: general conservation of genetic organization between HVS and Epstein-Barr virus.</title>
        <authorList>
            <person name="Nicholas J."/>
            <person name="Cameron K.R."/>
            <person name="Coleman H."/>
            <person name="Newman C."/>
            <person name="Honess R.W."/>
        </authorList>
    </citation>
    <scope>NUCLEOTIDE SEQUENCE [GENOMIC DNA]</scope>
</reference>
<reference key="3">
    <citation type="journal article" date="1988" name="J. Virol.">
        <title>Conservation of sequence and function between the product of the 52-kilodalton immediate-early gene of herpesvirus saimiri and the BMLF1-encoded transcriptional effector (EB2) of Epstein-Barr virus.</title>
        <authorList>
            <person name="Nicholas J."/>
            <person name="Gompels U.A."/>
            <person name="Craxton M.A."/>
            <person name="Honess R.W."/>
        </authorList>
    </citation>
    <scope>NUCLEOTIDE SEQUENCE [GENOMIC DNA] OF 631-835</scope>
</reference>
<gene>
    <name type="primary">56</name>
    <name type="synonym">EDRF4</name>
</gene>
<organism>
    <name type="scientific">Saimiriine herpesvirus 2 (strain 11)</name>
    <name type="common">SaHV-2</name>
    <name type="synonym">Herpesvirus saimiri</name>
    <dbReference type="NCBI Taxonomy" id="10383"/>
    <lineage>
        <taxon>Viruses</taxon>
        <taxon>Duplodnaviria</taxon>
        <taxon>Heunggongvirae</taxon>
        <taxon>Peploviricota</taxon>
        <taxon>Herviviricetes</taxon>
        <taxon>Herpesvirales</taxon>
        <taxon>Orthoherpesviridae</taxon>
        <taxon>Gammaherpesvirinae</taxon>
        <taxon>Rhadinovirus</taxon>
        <taxon>Rhadinovirus saimiriinegamma2</taxon>
        <taxon>Saimiriine herpesvirus 2</taxon>
    </lineage>
</organism>
<sequence length="835" mass="96128">MNEATEAWPKFKVLFATDGDSAEIITDILTGTDTNAFIYSVLHNCYIYPTEVKIVLILCLPAKKPGGGDKCLEVFQLHIDTELAIPFLFYTKPLKANDLHKYIDFKAARKNFKPILDIISTNKPSPKTHNSDIKSKIVWFRAKFVNSLRKLYKISSSPYWMITTFGSFEVPFLLTAIFYFFEQHNCTINTIFHLSSLFEKKLGTSLIAITTFEELGGVCSTSDYLKTAPAFINYCHIKLARDSLESQAIDTSIDTLRGQLMLSNQDLVHYIYLSFFQCLNKDIFIKYSHLTNSDNIHFVPETEVLAQSLDENFRKDMLTYYNKSTYLKTYITHKCIHLPDLIGYAPQDCTSFVYWAGQSKNVHNLLNVINTTHPHINISEDLNGLLDLAAIDSTFNVDNLKDCVFNESQKVPVYRCEFLNKTYFVIVQNDILKNVWSTDVLMPMQENWYMLKDTEITSNISYKETFTSMLTLRDQLKISRHEYFNPRLPVFNLVLDLDLHIHTSEHEIDEIYNLCCTLRSLILETLQLLGPVDIDTHHVYFFKSTCEKPENWIDNKELKFCYCTKKLGFRIITPLPAGVVLLGSNPVISFVNILNRTIKIDKKLLAMYPLIMETDGPFDVGIYHKGRCVRIPHTYKVNSSGRLERLLKLFVCHPHVDNKLQYVMDSFDINNLLYHSHNPEKVKQLKAVYDIADTNENFILQKAQAQLPQTNHNAVERIESASHMSITDWVAEFAWPRLFELIKLYLSEEKVSQFYHVSFAASTGNIIKIISLSGNFSCLNFKHRLKTQSVRIFLSLHLTPDNCVTLTLMSQCFASKCNSNKCIAHMSVRVPITDK</sequence>
<comment type="function">
    <text evidence="1">Essential component of the helicase/primase complex. Unwinds the DNA at the replication forks and generates single-stranded DNA for both leading and lagging strand synthesis. The primase initiates primer synthesis and thereby produces large amount of short RNA primers on the lagging strand that the polymerase elongates using dNTPs.</text>
</comment>
<comment type="subunit">
    <text evidence="1">Associates with the helicase and the primase-associated factor to form the helicase-primase factor.</text>
</comment>
<comment type="subcellular location">
    <subcellularLocation>
        <location evidence="1">Host nucleus</location>
    </subcellularLocation>
    <text evidence="1">Requires the presence of the primase associated factor to properly localize in the host cell nucleus.</text>
</comment>
<comment type="similarity">
    <text evidence="1">Belongs to the herpesviridae DNA primase family.</text>
</comment>
<dbReference type="EC" id="2.7.7.-" evidence="1"/>
<dbReference type="EMBL" id="X64346">
    <property type="protein sequence ID" value="CAA45678.1"/>
    <property type="molecule type" value="Genomic_DNA"/>
</dbReference>
<dbReference type="EMBL" id="M86409">
    <property type="protein sequence ID" value="AAA46133.1"/>
    <property type="molecule type" value="Genomic_DNA"/>
</dbReference>
<dbReference type="EMBL" id="M21943">
    <property type="protein sequence ID" value="AAA66557.1"/>
    <property type="molecule type" value="Genomic_DNA"/>
</dbReference>
<dbReference type="RefSeq" id="NP_040258.1">
    <property type="nucleotide sequence ID" value="NC_001350.1"/>
</dbReference>
<dbReference type="KEGG" id="vg:1682485"/>
<dbReference type="Proteomes" id="UP000000587">
    <property type="component" value="Segment"/>
</dbReference>
<dbReference type="GO" id="GO:0042025">
    <property type="term" value="C:host cell nucleus"/>
    <property type="evidence" value="ECO:0007669"/>
    <property type="project" value="UniProtKB-SubCell"/>
</dbReference>
<dbReference type="GO" id="GO:0003899">
    <property type="term" value="F:DNA-directed RNA polymerase activity"/>
    <property type="evidence" value="ECO:0007669"/>
    <property type="project" value="InterPro"/>
</dbReference>
<dbReference type="GO" id="GO:0008270">
    <property type="term" value="F:zinc ion binding"/>
    <property type="evidence" value="ECO:0007669"/>
    <property type="project" value="UniProtKB-KW"/>
</dbReference>
<dbReference type="GO" id="GO:0039686">
    <property type="term" value="P:bidirectional double-stranded viral DNA replication"/>
    <property type="evidence" value="ECO:0007669"/>
    <property type="project" value="InterPro"/>
</dbReference>
<dbReference type="GO" id="GO:0006260">
    <property type="term" value="P:DNA replication"/>
    <property type="evidence" value="ECO:0007669"/>
    <property type="project" value="UniProtKB-KW"/>
</dbReference>
<dbReference type="HAMAP" id="MF_04011">
    <property type="entry name" value="HSV_PRIM"/>
    <property type="match status" value="1"/>
</dbReference>
<dbReference type="InterPro" id="IPR033685">
    <property type="entry name" value="HSV_PRIM"/>
</dbReference>
<dbReference type="Pfam" id="PF03121">
    <property type="entry name" value="Herpes_UL52"/>
    <property type="match status" value="1"/>
</dbReference>
<feature type="chain" id="PRO_0000116111" description="DNA primase">
    <location>
        <begin position="1"/>
        <end position="835"/>
    </location>
</feature>
<feature type="zinc finger region" description="CHC2-type" evidence="1">
    <location>
        <begin position="778"/>
        <end position="817"/>
    </location>
</feature>
<feature type="site" description="Essential for primase activity" evidence="1">
    <location>
        <position position="496"/>
    </location>
</feature>
<feature type="site" description="Essential for primase activity" evidence="1">
    <location>
        <position position="498"/>
    </location>
</feature>
<proteinExistence type="inferred from homology"/>
<evidence type="ECO:0000255" key="1">
    <source>
        <dbReference type="HAMAP-Rule" id="MF_04011"/>
    </source>
</evidence>